<gene>
    <name evidence="1" type="primary">ftsA</name>
    <name type="ordered locus">SE_0860</name>
</gene>
<organism>
    <name type="scientific">Staphylococcus epidermidis (strain ATCC 12228 / FDA PCI 1200)</name>
    <dbReference type="NCBI Taxonomy" id="176280"/>
    <lineage>
        <taxon>Bacteria</taxon>
        <taxon>Bacillati</taxon>
        <taxon>Bacillota</taxon>
        <taxon>Bacilli</taxon>
        <taxon>Bacillales</taxon>
        <taxon>Staphylococcaceae</taxon>
        <taxon>Staphylococcus</taxon>
    </lineage>
</organism>
<keyword id="KW-0131">Cell cycle</keyword>
<keyword id="KW-0132">Cell division</keyword>
<keyword id="KW-1003">Cell membrane</keyword>
<keyword id="KW-0472">Membrane</keyword>
<comment type="function">
    <text evidence="1">Cell division protein that is involved in the assembly of the Z ring. May serve as a membrane anchor for the Z ring.</text>
</comment>
<comment type="subunit">
    <text evidence="1">Self-interacts. Interacts with FtsZ.</text>
</comment>
<comment type="subcellular location">
    <subcellularLocation>
        <location evidence="1">Cell membrane</location>
        <topology evidence="1">Peripheral membrane protein</topology>
        <orientation evidence="1">Cytoplasmic side</orientation>
    </subcellularLocation>
    <text evidence="1">Localizes to the Z ring in an FtsZ-dependent manner. Targeted to the membrane through a conserved C-terminal amphipathic helix.</text>
</comment>
<comment type="similarity">
    <text evidence="1">Belongs to the FtsA/MreB family.</text>
</comment>
<dbReference type="EMBL" id="AE015929">
    <property type="protein sequence ID" value="AAO04457.1"/>
    <property type="molecule type" value="Genomic_DNA"/>
</dbReference>
<dbReference type="RefSeq" id="NP_764415.1">
    <property type="nucleotide sequence ID" value="NC_004461.1"/>
</dbReference>
<dbReference type="RefSeq" id="WP_001830115.1">
    <property type="nucleotide sequence ID" value="NZ_WBME01000036.1"/>
</dbReference>
<dbReference type="SMR" id="Q8CPK5"/>
<dbReference type="KEGG" id="sep:SE_0860"/>
<dbReference type="PATRIC" id="fig|176280.10.peg.833"/>
<dbReference type="eggNOG" id="COG0849">
    <property type="taxonomic scope" value="Bacteria"/>
</dbReference>
<dbReference type="HOGENOM" id="CLU_037850_1_0_9"/>
<dbReference type="OrthoDB" id="9768127at2"/>
<dbReference type="Proteomes" id="UP000001411">
    <property type="component" value="Chromosome"/>
</dbReference>
<dbReference type="GO" id="GO:0032153">
    <property type="term" value="C:cell division site"/>
    <property type="evidence" value="ECO:0007669"/>
    <property type="project" value="UniProtKB-UniRule"/>
</dbReference>
<dbReference type="GO" id="GO:0009898">
    <property type="term" value="C:cytoplasmic side of plasma membrane"/>
    <property type="evidence" value="ECO:0007669"/>
    <property type="project" value="UniProtKB-UniRule"/>
</dbReference>
<dbReference type="GO" id="GO:0043093">
    <property type="term" value="P:FtsZ-dependent cytokinesis"/>
    <property type="evidence" value="ECO:0007669"/>
    <property type="project" value="UniProtKB-UniRule"/>
</dbReference>
<dbReference type="CDD" id="cd24048">
    <property type="entry name" value="ASKHA_NBD_FtsA"/>
    <property type="match status" value="1"/>
</dbReference>
<dbReference type="FunFam" id="3.30.420.40:FF:000196">
    <property type="entry name" value="Cell division protein FtsA"/>
    <property type="match status" value="1"/>
</dbReference>
<dbReference type="Gene3D" id="3.30.1490.110">
    <property type="match status" value="1"/>
</dbReference>
<dbReference type="Gene3D" id="3.30.420.40">
    <property type="match status" value="2"/>
</dbReference>
<dbReference type="HAMAP" id="MF_02033">
    <property type="entry name" value="FtsA"/>
    <property type="match status" value="1"/>
</dbReference>
<dbReference type="InterPro" id="IPR043129">
    <property type="entry name" value="ATPase_NBD"/>
</dbReference>
<dbReference type="InterPro" id="IPR020823">
    <property type="entry name" value="Cell_div_FtsA"/>
</dbReference>
<dbReference type="InterPro" id="IPR050696">
    <property type="entry name" value="FtsA/MreB"/>
</dbReference>
<dbReference type="InterPro" id="IPR003494">
    <property type="entry name" value="SHS2_FtsA"/>
</dbReference>
<dbReference type="NCBIfam" id="TIGR01174">
    <property type="entry name" value="ftsA"/>
    <property type="match status" value="1"/>
</dbReference>
<dbReference type="PANTHER" id="PTHR32432:SF4">
    <property type="entry name" value="CELL DIVISION PROTEIN FTSA"/>
    <property type="match status" value="1"/>
</dbReference>
<dbReference type="PANTHER" id="PTHR32432">
    <property type="entry name" value="CELL DIVISION PROTEIN FTSA-RELATED"/>
    <property type="match status" value="1"/>
</dbReference>
<dbReference type="Pfam" id="PF14450">
    <property type="entry name" value="FtsA"/>
    <property type="match status" value="1"/>
</dbReference>
<dbReference type="Pfam" id="PF02491">
    <property type="entry name" value="SHS2_FTSA"/>
    <property type="match status" value="1"/>
</dbReference>
<dbReference type="PIRSF" id="PIRSF003101">
    <property type="entry name" value="FtsA"/>
    <property type="match status" value="1"/>
</dbReference>
<dbReference type="SMART" id="SM00842">
    <property type="entry name" value="FtsA"/>
    <property type="match status" value="1"/>
</dbReference>
<dbReference type="SUPFAM" id="SSF53067">
    <property type="entry name" value="Actin-like ATPase domain"/>
    <property type="match status" value="2"/>
</dbReference>
<protein>
    <recommendedName>
        <fullName evidence="1">Cell division protein FtsA</fullName>
    </recommendedName>
</protein>
<evidence type="ECO:0000255" key="1">
    <source>
        <dbReference type="HAMAP-Rule" id="MF_02033"/>
    </source>
</evidence>
<evidence type="ECO:0000256" key="2">
    <source>
        <dbReference type="SAM" id="MobiDB-lite"/>
    </source>
</evidence>
<sequence length="464" mass="52144">MEEHYYVSIDIGSSSVKTIVGEKFHNGINVIGTGQTYTSGIKNGLIDDFDIARQAIKDTIKKASIASGVDIKDVFLKLPIIGTEVYDESNEIEFYEDTEIDGTHIESVLEGIRDKNDVPETEVINVFPIRFVVDKDNEVSDPKELIARHSLKVDAGVIAIQKSILINMIKCVEACGVDVLDVYSDAYNYGFILTPTEKELGACVIDIGEDLTQVAFYERGELVDAESIEMAGRDITDDIAQGLNTTYDTAEKVKHQYGHAFYDSASDQDVFSVDQVDSDEHVQYTQKDLSDFIEQRVEDIFFEVFDVLQELGLTKVNGGFVVTGGSANLLGVKELLQDMVSEKVRIHTPSQMGIRKPEFSSAISTISSSIAFDELLDYVTISYQDNEEFEEEVIETDKDTETKSSGFDWFKRKSNKKENDEVAPEAPREESYEDRENHLEDEQQTEGKAKEESKFKKLMKSLFE</sequence>
<name>FTSA_STAES</name>
<proteinExistence type="inferred from homology"/>
<feature type="chain" id="PRO_0000062753" description="Cell division protein FtsA">
    <location>
        <begin position="1"/>
        <end position="464"/>
    </location>
</feature>
<feature type="region of interest" description="Disordered" evidence="2">
    <location>
        <begin position="392"/>
        <end position="464"/>
    </location>
</feature>
<feature type="compositionally biased region" description="Basic and acidic residues" evidence="2">
    <location>
        <begin position="416"/>
        <end position="455"/>
    </location>
</feature>
<reference key="1">
    <citation type="journal article" date="2003" name="Mol. Microbiol.">
        <title>Genome-based analysis of virulence genes in a non-biofilm-forming Staphylococcus epidermidis strain (ATCC 12228).</title>
        <authorList>
            <person name="Zhang Y.-Q."/>
            <person name="Ren S.-X."/>
            <person name="Li H.-L."/>
            <person name="Wang Y.-X."/>
            <person name="Fu G."/>
            <person name="Yang J."/>
            <person name="Qin Z.-Q."/>
            <person name="Miao Y.-G."/>
            <person name="Wang W.-Y."/>
            <person name="Chen R.-S."/>
            <person name="Shen Y."/>
            <person name="Chen Z."/>
            <person name="Yuan Z.-H."/>
            <person name="Zhao G.-P."/>
            <person name="Qu D."/>
            <person name="Danchin A."/>
            <person name="Wen Y.-M."/>
        </authorList>
    </citation>
    <scope>NUCLEOTIDE SEQUENCE [LARGE SCALE GENOMIC DNA]</scope>
    <source>
        <strain>ATCC 12228 / FDA PCI 1200</strain>
    </source>
</reference>
<accession>Q8CPK5</accession>